<protein>
    <recommendedName>
        <fullName>NAD-specific glutamate dehydrogenase A</fullName>
        <shortName>NAD-GDH A</shortName>
        <ecNumber>1.4.1.2</ecNumber>
    </recommendedName>
</protein>
<sequence length="435" mass="47459">MTMASKSDSTHDESGDEAADSTEPESALETARRQLYHAASYLDIDQNIVERLKYPKKVHEVTIPIERDDGTVEVFTGYRAQHDSVRGPYKGGLRYHPDVTRDECVGLGMWMTWKCAVMDLPFGGAKGGVAVNPKELSPEEKERLTRRFTQEIRDVIGPNQDIPAPDMGTDPQTMAWLMDAYSMQEGETTPGVVTGKPPVVGGSEGREEAPGRSVAIITQLVCEYYDQPLDETTVAVQGYGSVGANAARLLDKWGATIVAISDVNGAMYEPDGIDTASVPSHDEEPEAVTTYADTVISNEELLTLDVDVLIPAALGNVITKENAEAIAADLVVEGANGPTTSTADSILADRDVAVIPDILANAGGVTVSYFEWLQDINRRAWSLERVNDELEAEMQAAWRAVKDEYENRDVTWRDAAYIVALSRIAEAHEARGLWP</sequence>
<proteinExistence type="evidence at protein level"/>
<keyword id="KW-0903">Direct protein sequencing</keyword>
<keyword id="KW-0520">NAD</keyword>
<keyword id="KW-0560">Oxidoreductase</keyword>
<evidence type="ECO:0000250" key="1"/>
<evidence type="ECO:0000255" key="2">
    <source>
        <dbReference type="PROSITE-ProRule" id="PRU10011"/>
    </source>
</evidence>
<evidence type="ECO:0000256" key="3">
    <source>
        <dbReference type="SAM" id="MobiDB-lite"/>
    </source>
</evidence>
<evidence type="ECO:0000269" key="4">
    <source>
    </source>
</evidence>
<evidence type="ECO:0000269" key="5">
    <source>
    </source>
</evidence>
<evidence type="ECO:0000305" key="6"/>
<evidence type="ECO:0000305" key="7">
    <source>
    </source>
</evidence>
<evidence type="ECO:0000305" key="8">
    <source>
    </source>
</evidence>
<name>DHE2_HALSI</name>
<dbReference type="EC" id="1.4.1.2"/>
<dbReference type="EMBL" id="X63837">
    <property type="protein sequence ID" value="CAA45327.1"/>
    <property type="molecule type" value="Genomic_DNA"/>
</dbReference>
<dbReference type="EMBL" id="AY840088">
    <property type="protein sequence ID" value="AAW19068.1"/>
    <property type="molecule type" value="Genomic_DNA"/>
</dbReference>
<dbReference type="PIR" id="S18609">
    <property type="entry name" value="S18609"/>
</dbReference>
<dbReference type="RefSeq" id="WP_135806866.1">
    <property type="nucleotide sequence ID" value="NZ_JAQMIA010000111.1"/>
</dbReference>
<dbReference type="SMR" id="P29051"/>
<dbReference type="BioCyc" id="MetaCyc:MONOMER-741"/>
<dbReference type="BRENDA" id="1.4.1.2">
    <property type="organism ID" value="2552"/>
</dbReference>
<dbReference type="GO" id="GO:0004352">
    <property type="term" value="F:glutamate dehydrogenase (NAD+) activity"/>
    <property type="evidence" value="ECO:0007669"/>
    <property type="project" value="UniProtKB-EC"/>
</dbReference>
<dbReference type="GO" id="GO:0006538">
    <property type="term" value="P:glutamate catabolic process"/>
    <property type="evidence" value="ECO:0007669"/>
    <property type="project" value="TreeGrafter"/>
</dbReference>
<dbReference type="CDD" id="cd01076">
    <property type="entry name" value="NAD_bind_1_Glu_DH"/>
    <property type="match status" value="1"/>
</dbReference>
<dbReference type="FunFam" id="3.40.50.10860:FF:000003">
    <property type="entry name" value="Glutamate dehydrogenase"/>
    <property type="match status" value="1"/>
</dbReference>
<dbReference type="Gene3D" id="3.40.50.10860">
    <property type="entry name" value="Leucine Dehydrogenase, chain A, domain 1"/>
    <property type="match status" value="1"/>
</dbReference>
<dbReference type="Gene3D" id="3.40.50.720">
    <property type="entry name" value="NAD(P)-binding Rossmann-like Domain"/>
    <property type="match status" value="1"/>
</dbReference>
<dbReference type="InterPro" id="IPR046346">
    <property type="entry name" value="Aminoacid_DH-like_N_sf"/>
</dbReference>
<dbReference type="InterPro" id="IPR006095">
    <property type="entry name" value="Glu/Leu/Phe/Val/Trp_DH"/>
</dbReference>
<dbReference type="InterPro" id="IPR006096">
    <property type="entry name" value="Glu/Leu/Phe/Val/Trp_DH_C"/>
</dbReference>
<dbReference type="InterPro" id="IPR006097">
    <property type="entry name" value="Glu/Leu/Phe/Val/Trp_DH_dimer"/>
</dbReference>
<dbReference type="InterPro" id="IPR033524">
    <property type="entry name" value="Glu/Leu/Phe/Val_DH_AS"/>
</dbReference>
<dbReference type="InterPro" id="IPR014362">
    <property type="entry name" value="Glu_DH"/>
</dbReference>
<dbReference type="InterPro" id="IPR054867">
    <property type="entry name" value="GluDhGdhB"/>
</dbReference>
<dbReference type="InterPro" id="IPR036291">
    <property type="entry name" value="NAD(P)-bd_dom_sf"/>
</dbReference>
<dbReference type="InterPro" id="IPR033922">
    <property type="entry name" value="NAD_bind_Glu_DH"/>
</dbReference>
<dbReference type="NCBIfam" id="NF041398">
    <property type="entry name" value="GluDhGdhB_Halo"/>
    <property type="match status" value="1"/>
</dbReference>
<dbReference type="PANTHER" id="PTHR11606">
    <property type="entry name" value="GLUTAMATE DEHYDROGENASE"/>
    <property type="match status" value="1"/>
</dbReference>
<dbReference type="PANTHER" id="PTHR11606:SF13">
    <property type="entry name" value="GLUTAMATE DEHYDROGENASE 1, MITOCHONDRIAL"/>
    <property type="match status" value="1"/>
</dbReference>
<dbReference type="Pfam" id="PF00208">
    <property type="entry name" value="ELFV_dehydrog"/>
    <property type="match status" value="1"/>
</dbReference>
<dbReference type="Pfam" id="PF02812">
    <property type="entry name" value="ELFV_dehydrog_N"/>
    <property type="match status" value="1"/>
</dbReference>
<dbReference type="PIRSF" id="PIRSF000185">
    <property type="entry name" value="Glu_DH"/>
    <property type="match status" value="1"/>
</dbReference>
<dbReference type="PRINTS" id="PR00082">
    <property type="entry name" value="GLFDHDRGNASE"/>
</dbReference>
<dbReference type="SMART" id="SM00839">
    <property type="entry name" value="ELFV_dehydrog"/>
    <property type="match status" value="1"/>
</dbReference>
<dbReference type="SUPFAM" id="SSF53223">
    <property type="entry name" value="Aminoacid dehydrogenase-like, N-terminal domain"/>
    <property type="match status" value="1"/>
</dbReference>
<dbReference type="SUPFAM" id="SSF51735">
    <property type="entry name" value="NAD(P)-binding Rossmann-fold domains"/>
    <property type="match status" value="1"/>
</dbReference>
<dbReference type="PROSITE" id="PS00074">
    <property type="entry name" value="GLFV_DEHYDROGENASE"/>
    <property type="match status" value="1"/>
</dbReference>
<organism>
    <name type="scientific">Halobacterium salinarum</name>
    <name type="common">Halobacterium halobium</name>
    <dbReference type="NCBI Taxonomy" id="2242"/>
    <lineage>
        <taxon>Archaea</taxon>
        <taxon>Methanobacteriati</taxon>
        <taxon>Methanobacteriota</taxon>
        <taxon>Stenosarchaea group</taxon>
        <taxon>Halobacteria</taxon>
        <taxon>Halobacteriales</taxon>
        <taxon>Halobacteriaceae</taxon>
        <taxon>Halobacterium</taxon>
    </lineage>
</organism>
<comment type="catalytic activity">
    <reaction evidence="4 5">
        <text>L-glutamate + NAD(+) + H2O = 2-oxoglutarate + NH4(+) + NADH + H(+)</text>
        <dbReference type="Rhea" id="RHEA:15133"/>
        <dbReference type="ChEBI" id="CHEBI:15377"/>
        <dbReference type="ChEBI" id="CHEBI:15378"/>
        <dbReference type="ChEBI" id="CHEBI:16810"/>
        <dbReference type="ChEBI" id="CHEBI:28938"/>
        <dbReference type="ChEBI" id="CHEBI:29985"/>
        <dbReference type="ChEBI" id="CHEBI:57540"/>
        <dbReference type="ChEBI" id="CHEBI:57945"/>
        <dbReference type="EC" id="1.4.1.2"/>
    </reaction>
</comment>
<comment type="activity regulation">
    <text evidence="5">Inhibited by ethanol, acetone, acetonitrile and 2-propanol (65 to 70% inhibition) and to a lesser extent by methanol and dimethyl formamide (26 and 49 % inhibition respectively). No effect of glycerol or DMSO.</text>
</comment>
<comment type="biophysicochemical properties">
    <kinetics>
        <KM evidence="5">14 mM for glutamate (for the recombinant enzyme, in the presence of 3.2 M NaCl)</KM>
        <KM evidence="5">0.35 mM for NAD(+) (for the recombinant enzyme, in the presence of 3.2 M NaCl)</KM>
        <KM evidence="5">3.4 mM for 2-oxoglutarate (for the recombinant enzyme, in the presence of 3.2 M NaCl)</KM>
        <KM evidence="5">118 mM for NH(4)(+) (for the recombinant enzyme, in the presence of 3.2 M NaCl)</KM>
        <KM evidence="5">0.011 mM for NADH (for the recombinant enzyme, in the presence of 3.2 M NaCl)</KM>
        <KM evidence="5">9 mM for glutamate (for the recombinant enzyme, in the presence of 10% DMSO)</KM>
        <KM evidence="5">0.13 mM for NAD(+) (for the recombinant enzyme, in the presence of 10% DMSO)</KM>
        <KM evidence="5">0.8 mM for 2-oxoglutarate (for the recombinant enzyme, in the presence of 20% DMSO)</KM>
        <KM evidence="5">112 mM for NH(4)(+) (for the recombinant enzyme, in the presence of 20% DMSO)</KM>
        <KM evidence="5">0.025 mM for NADH (for the recombinant enzyme, in the presence of 20% DMSO)</KM>
        <text>kcat is 24 sec(-1) for glutamate in the presence of 3.2 M NaCl. kcat is 16 sec(-1) for NAD(+) in the presence of 3.2 M NaCl. kcat is 56 sec(-1) for 2-oxoglutarate in the presence of 3.2 M NaCl. kcat is 85 sec(-1) for NH(4)(+) in the presence of 3.2 M NaCl. kcat is 39 sec(-1) for NADH in the presence of 3.2 M NaCl. kcat is 17 sec(-1) for glutamate in the presence of 10% DMSO. kcat is 15 sec(-1) for NAD(+) in the presence of 10% DMSO. kcat is 46 sec(-1) for 2-oxoglutarate in the presence of 20% DMSO. kcat is 84 sec(-1) for NH(4)(+) in the presence of 20% DMSO. kcat is 47 sec(-1) for NADH in the presence of 20% DMSO.</text>
    </kinetics>
    <phDependence>
        <text evidence="5">Optimum pH for oxidative deamination is 9.2. Optimum pH for reductive amination is 8.5.</text>
    </phDependence>
    <temperatureDependence>
        <text evidence="5">Optimum temperature is 70 degrees Celsius. The enzyme is entirely stable from 50 to 70 degrees Celsius and 55 % activity is retained after 30 minutes at 90 degrees Celsius.</text>
    </temperatureDependence>
</comment>
<comment type="subunit">
    <text evidence="1">Homohexamer.</text>
</comment>
<comment type="PTM">
    <text evidence="4">The N-terminus is blocked.</text>
</comment>
<comment type="miscellaneous">
    <text evidence="7">Strain NRC-36014 contains 4 distinct glutamate dehydrogenases while strain NRC-1 contains only 3. GdhX is only present in strain NRC-36014 (PubMed:15780999).</text>
</comment>
<comment type="similarity">
    <text evidence="6">Belongs to the Glu/Leu/Phe/Val dehydrogenases family.</text>
</comment>
<comment type="caution">
    <text evidence="8">Was initially thought to be a NADP-specific glutamate dehydrogenase.</text>
</comment>
<gene>
    <name type="primary">gdhX</name>
    <name type="synonym">gdhA</name>
</gene>
<feature type="chain" id="PRO_0000182779" description="NAD-specific glutamate dehydrogenase A">
    <location>
        <begin position="1"/>
        <end position="435"/>
    </location>
</feature>
<feature type="region of interest" description="Disordered" evidence="3">
    <location>
        <begin position="1"/>
        <end position="28"/>
    </location>
</feature>
<feature type="compositionally biased region" description="Acidic residues" evidence="3">
    <location>
        <begin position="14"/>
        <end position="23"/>
    </location>
</feature>
<feature type="active site" evidence="2">
    <location>
        <position position="126"/>
    </location>
</feature>
<reference key="1">
    <citation type="journal article" date="1991" name="Mol. Gen. Genet.">
        <title>The gene for a halophilic glutamate dehydrogenase: sequence, transcription analysis and phylogenetic implications.</title>
        <authorList>
            <person name="Benachenhou N."/>
            <person name="Baldacci G."/>
        </authorList>
    </citation>
    <scope>NUCLEOTIDE SEQUENCE [GENOMIC DNA]</scope>
    <source>
        <strain>CCM 2090 / JCM 9120</strain>
    </source>
</reference>
<reference key="2">
    <citation type="journal article" date="2005" name="Gene">
        <title>The discovery of four distinct glutamate dehydrogenase genes in a strain of Halobacterium salinarum.</title>
        <authorList>
            <person name="Ingoldsby L.M."/>
            <person name="Geoghegan K.F."/>
            <person name="Hayden B.M."/>
            <person name="Engel P.C."/>
        </authorList>
    </citation>
    <scope>NUCLEOTIDE SEQUENCE [GENOMIC DNA]</scope>
    <source>
        <strain>NRC-36014</strain>
    </source>
</reference>
<reference key="3">
    <citation type="journal article" date="2002" name="FEMS Microbiol. Lett.">
        <title>Glutamate dehydrogenase of Halobacterium salinarum: evidence that the gene sequence currently assigned to the NADP+-dependent enzyme is in fact that of the NAD+-dependent glutamate dehydrogenase.</title>
        <authorList>
            <person name="Hayden B.M."/>
            <person name="Bonete M.J."/>
            <person name="Brown P.E."/>
            <person name="Moir A.J."/>
            <person name="Engel P.C."/>
        </authorList>
    </citation>
    <scope>NUCLEOTIDE SEQUENCE [GENOMIC DNA]</scope>
    <scope>PROTEIN SEQUENCE OF 119-128; 184-193 AND 268-276</scope>
    <scope>CHARACTERIZATION</scope>
    <scope>CATALYTIC ACTIVITY</scope>
    <source>
        <strain>NRC-36014</strain>
    </source>
</reference>
<reference key="4">
    <citation type="journal article" date="2012" name="Extremophiles">
        <title>Overexpression in a non-native halophilic host and biotechnological potential of NAD+-dependent glutamate dehydrogenase from Halobacterium salinarum strain NRC-36014.</title>
        <authorList>
            <person name="Munawar N."/>
            <person name="Engel P.C."/>
        </authorList>
    </citation>
    <scope>CATALYTIC ACTIVITY</scope>
    <scope>BIOPHYSICOCHEMICAL PROPERTIES</scope>
    <scope>ACTIVITY REGULATION</scope>
    <source>
        <strain>NRC-36014</strain>
    </source>
</reference>
<accession>P29051</accession>